<sequence length="241" mass="24624">MRHTRFHPIKLAWITAVVAGLMVGVATPADAEPGQWDPTLPALVSAGAPGDPLAVANASLQATAQATQTTLDLGRQFLGGLGINLGGPAASAPSAATTGASRIPRANARQAVEYVIRRAGSQMGVPYSWGGGSLQGPSKGVDSGANTVGFDCSGLVRYAFAGVGVLIPRFSGDQYNAGRHVPPAEAKRGDLIFYGPGGGQHVTLYLGNGQMLEASGSAGKVTVSPVRKAGMTPFVTRIIEY</sequence>
<proteinExistence type="evidence at protein level"/>
<accession>P9WHU5</accession>
<accession>L0T9R3</accession>
<accession>O53169</accession>
<accession>Q7D8D5</accession>
<comment type="function">
    <text evidence="3">Peptidoglycan endopeptidase that cleaves the bond between D-glutamate and meso-diaminopimelate. Binds high-molecular weight peptidoglycan, but does not degrade it. Required for normal separation of daughter cells after cell division and cell wall integrity. Required for host cell invasion.</text>
</comment>
<comment type="biophysicochemical properties">
    <phDependence>
        <text evidence="4">Optimum pH is 6.</text>
    </phDependence>
</comment>
<comment type="subunit">
    <text evidence="4">Monomer.</text>
</comment>
<comment type="similarity">
    <text evidence="2 5">Belongs to the peptidase C40 family.</text>
</comment>
<dbReference type="EC" id="3.4.-.-"/>
<dbReference type="EMBL" id="AL123456">
    <property type="protein sequence ID" value="CCP44238.1"/>
    <property type="molecule type" value="Genomic_DNA"/>
</dbReference>
<dbReference type="PIR" id="A70874">
    <property type="entry name" value="A70874"/>
</dbReference>
<dbReference type="RefSeq" id="NP_215994.1">
    <property type="nucleotide sequence ID" value="NC_000962.3"/>
</dbReference>
<dbReference type="RefSeq" id="WP_003407525.1">
    <property type="nucleotide sequence ID" value="NZ_NVQJ01000004.1"/>
</dbReference>
<dbReference type="PDB" id="3PBI">
    <property type="method" value="X-ray"/>
    <property type="resolution" value="1.60 A"/>
    <property type="chains" value="A=30-241"/>
</dbReference>
<dbReference type="PDBsum" id="3PBI"/>
<dbReference type="SMR" id="P9WHU5"/>
<dbReference type="STRING" id="83332.Rv1478"/>
<dbReference type="PaxDb" id="83332-Rv1478"/>
<dbReference type="DNASU" id="886535"/>
<dbReference type="GeneID" id="45425457"/>
<dbReference type="GeneID" id="886535"/>
<dbReference type="KEGG" id="mtu:Rv1478"/>
<dbReference type="KEGG" id="mtv:RVBD_1478"/>
<dbReference type="TubercuList" id="Rv1478"/>
<dbReference type="eggNOG" id="COG0791">
    <property type="taxonomic scope" value="Bacteria"/>
</dbReference>
<dbReference type="InParanoid" id="P9WHU5"/>
<dbReference type="OrthoDB" id="4771638at2"/>
<dbReference type="PhylomeDB" id="P9WHU5"/>
<dbReference type="EvolutionaryTrace" id="P9WHU5"/>
<dbReference type="Proteomes" id="UP000001584">
    <property type="component" value="Chromosome"/>
</dbReference>
<dbReference type="GO" id="GO:0009274">
    <property type="term" value="C:peptidoglycan-based cell wall"/>
    <property type="evidence" value="ECO:0007005"/>
    <property type="project" value="MTBBASE"/>
</dbReference>
<dbReference type="GO" id="GO:0008234">
    <property type="term" value="F:cysteine-type peptidase activity"/>
    <property type="evidence" value="ECO:0007669"/>
    <property type="project" value="UniProtKB-KW"/>
</dbReference>
<dbReference type="GO" id="GO:0008745">
    <property type="term" value="F:N-acetylmuramoyl-L-alanine amidase activity"/>
    <property type="evidence" value="ECO:0000318"/>
    <property type="project" value="GO_Central"/>
</dbReference>
<dbReference type="GO" id="GO:0071555">
    <property type="term" value="P:cell wall organization"/>
    <property type="evidence" value="ECO:0007669"/>
    <property type="project" value="UniProtKB-KW"/>
</dbReference>
<dbReference type="GO" id="GO:0071554">
    <property type="term" value="P:cell wall organization or biogenesis"/>
    <property type="evidence" value="ECO:0000318"/>
    <property type="project" value="GO_Central"/>
</dbReference>
<dbReference type="GO" id="GO:0006508">
    <property type="term" value="P:proteolysis"/>
    <property type="evidence" value="ECO:0007669"/>
    <property type="project" value="UniProtKB-KW"/>
</dbReference>
<dbReference type="FunFam" id="3.90.1720.10:FF:000010">
    <property type="entry name" value="Peptidoglycan endopeptidase RipA"/>
    <property type="match status" value="1"/>
</dbReference>
<dbReference type="Gene3D" id="3.90.1720.10">
    <property type="entry name" value="endopeptidase domain like (from Nostoc punctiforme)"/>
    <property type="match status" value="1"/>
</dbReference>
<dbReference type="InterPro" id="IPR000064">
    <property type="entry name" value="NLP_P60_dom"/>
</dbReference>
<dbReference type="InterPro" id="IPR038765">
    <property type="entry name" value="Papain-like_cys_pep_sf"/>
</dbReference>
<dbReference type="InterPro" id="IPR051794">
    <property type="entry name" value="PG_Endopeptidase_C40"/>
</dbReference>
<dbReference type="InterPro" id="IPR049729">
    <property type="entry name" value="RipB"/>
</dbReference>
<dbReference type="NCBIfam" id="NF033742">
    <property type="entry name" value="NlpC_p60_RipB"/>
    <property type="match status" value="1"/>
</dbReference>
<dbReference type="PANTHER" id="PTHR47359:SF3">
    <property type="entry name" value="NLP_P60 DOMAIN-CONTAINING PROTEIN-RELATED"/>
    <property type="match status" value="1"/>
</dbReference>
<dbReference type="PANTHER" id="PTHR47359">
    <property type="entry name" value="PEPTIDOGLYCAN DL-ENDOPEPTIDASE CWLO"/>
    <property type="match status" value="1"/>
</dbReference>
<dbReference type="Pfam" id="PF00877">
    <property type="entry name" value="NLPC_P60"/>
    <property type="match status" value="1"/>
</dbReference>
<dbReference type="SUPFAM" id="SSF54001">
    <property type="entry name" value="Cysteine proteinases"/>
    <property type="match status" value="1"/>
</dbReference>
<dbReference type="PROSITE" id="PS51935">
    <property type="entry name" value="NLPC_P60"/>
    <property type="match status" value="1"/>
</dbReference>
<keyword id="KW-0002">3D-structure</keyword>
<keyword id="KW-0961">Cell wall biogenesis/degradation</keyword>
<keyword id="KW-0378">Hydrolase</keyword>
<keyword id="KW-0645">Protease</keyword>
<keyword id="KW-1185">Reference proteome</keyword>
<keyword id="KW-0732">Signal</keyword>
<keyword id="KW-0788">Thiol protease</keyword>
<reference key="1">
    <citation type="journal article" date="1998" name="Nature">
        <title>Deciphering the biology of Mycobacterium tuberculosis from the complete genome sequence.</title>
        <authorList>
            <person name="Cole S.T."/>
            <person name="Brosch R."/>
            <person name="Parkhill J."/>
            <person name="Garnier T."/>
            <person name="Churcher C.M."/>
            <person name="Harris D.E."/>
            <person name="Gordon S.V."/>
            <person name="Eiglmeier K."/>
            <person name="Gas S."/>
            <person name="Barry C.E. III"/>
            <person name="Tekaia F."/>
            <person name="Badcock K."/>
            <person name="Basham D."/>
            <person name="Brown D."/>
            <person name="Chillingworth T."/>
            <person name="Connor R."/>
            <person name="Davies R.M."/>
            <person name="Devlin K."/>
            <person name="Feltwell T."/>
            <person name="Gentles S."/>
            <person name="Hamlin N."/>
            <person name="Holroyd S."/>
            <person name="Hornsby T."/>
            <person name="Jagels K."/>
            <person name="Krogh A."/>
            <person name="McLean J."/>
            <person name="Moule S."/>
            <person name="Murphy L.D."/>
            <person name="Oliver S."/>
            <person name="Osborne J."/>
            <person name="Quail M.A."/>
            <person name="Rajandream M.A."/>
            <person name="Rogers J."/>
            <person name="Rutter S."/>
            <person name="Seeger K."/>
            <person name="Skelton S."/>
            <person name="Squares S."/>
            <person name="Squares R."/>
            <person name="Sulston J.E."/>
            <person name="Taylor K."/>
            <person name="Whitehead S."/>
            <person name="Barrell B.G."/>
        </authorList>
    </citation>
    <scope>NUCLEOTIDE SEQUENCE [LARGE SCALE GENOMIC DNA]</scope>
    <source>
        <strain>ATCC 25618 / H37Rv</strain>
    </source>
</reference>
<reference key="2">
    <citation type="journal article" date="2006" name="Infect. Immun.">
        <title>A mycobacterial operon essential for virulence in vivo and invasion and intracellular persistence in macrophages.</title>
        <authorList>
            <person name="Gao L.Y."/>
            <person name="Pak M."/>
            <person name="Kish R."/>
            <person name="Kajihara K."/>
            <person name="Brown E.J."/>
        </authorList>
    </citation>
    <scope>FUNCTION IN HOST CELL INVASION</scope>
    <scope>MUTAGENESIS OF 188-ARG--ASP-200</scope>
    <source>
        <strain>ATCC 25618 / H37Rv</strain>
    </source>
</reference>
<reference key="3">
    <citation type="journal article" date="2011" name="Mol. Cell. Proteomics">
        <title>Proteogenomic analysis of Mycobacterium tuberculosis by high resolution mass spectrometry.</title>
        <authorList>
            <person name="Kelkar D.S."/>
            <person name="Kumar D."/>
            <person name="Kumar P."/>
            <person name="Balakrishnan L."/>
            <person name="Muthusamy B."/>
            <person name="Yadav A.K."/>
            <person name="Shrivastava P."/>
            <person name="Marimuthu A."/>
            <person name="Anand S."/>
            <person name="Sundaram H."/>
            <person name="Kingsbury R."/>
            <person name="Harsha H.C."/>
            <person name="Nair B."/>
            <person name="Prasad T.S."/>
            <person name="Chauhan D.S."/>
            <person name="Katoch K."/>
            <person name="Katoch V.M."/>
            <person name="Kumar P."/>
            <person name="Chaerkady R."/>
            <person name="Ramachandran S."/>
            <person name="Dash D."/>
            <person name="Pandey A."/>
        </authorList>
    </citation>
    <scope>IDENTIFICATION BY MASS SPECTROMETRY [LARGE SCALE ANALYSIS]</scope>
    <source>
        <strain>ATCC 25618 / H37Rv</strain>
    </source>
</reference>
<reference key="4">
    <citation type="journal article" date="2011" name="J. Mol. Biol.">
        <title>Peptidoglycan remodeling in Mycobacterium tuberculosis: comparison of structures and catalytic activities of RipA and RipB.</title>
        <authorList>
            <person name="Both D."/>
            <person name="Schneider G."/>
            <person name="Schnell R."/>
        </authorList>
    </citation>
    <scope>X-RAY CRYSTALLOGRAPHY (1.60 ANGSTROMS) OF 30-241</scope>
    <scope>CATALYTIC ACTIVITY</scope>
    <scope>PEPTIDOGLYCAN BINDING</scope>
    <scope>SUBUNIT</scope>
    <scope>BIOPHYSICOCHEMICAL PROPERTIES</scope>
    <scope>ACTIVE SITE</scope>
    <source>
        <strain>ATCC 25618 / H37Rv</strain>
    </source>
</reference>
<protein>
    <recommendedName>
        <fullName>Peptidoglycan endopeptidase RipB</fullName>
        <ecNumber>3.4.-.-</ecNumber>
    </recommendedName>
    <alternativeName>
        <fullName>Macrophage invasion and intracellular persistence protein B</fullName>
    </alternativeName>
    <alternativeName>
        <fullName>Resuscitation-promoting factor interaction partner B</fullName>
        <shortName>Rpf-interacting protein B</shortName>
    </alternativeName>
</protein>
<name>RIPB_MYCTU</name>
<organism>
    <name type="scientific">Mycobacterium tuberculosis (strain ATCC 25618 / H37Rv)</name>
    <dbReference type="NCBI Taxonomy" id="83332"/>
    <lineage>
        <taxon>Bacteria</taxon>
        <taxon>Bacillati</taxon>
        <taxon>Actinomycetota</taxon>
        <taxon>Actinomycetes</taxon>
        <taxon>Mycobacteriales</taxon>
        <taxon>Mycobacteriaceae</taxon>
        <taxon>Mycobacterium</taxon>
        <taxon>Mycobacterium tuberculosis complex</taxon>
    </lineage>
</organism>
<gene>
    <name type="primary">ripB</name>
    <name type="ordered locus">Rv1478</name>
</gene>
<feature type="signal peptide" evidence="1">
    <location>
        <begin position="1"/>
        <end position="31"/>
    </location>
</feature>
<feature type="chain" id="PRO_0000413763" description="Peptidoglycan endopeptidase RipB">
    <location>
        <begin position="32"/>
        <end position="241"/>
    </location>
</feature>
<feature type="domain" description="NlpC/P60" evidence="2">
    <location>
        <begin position="109"/>
        <end position="241"/>
    </location>
</feature>
<feature type="active site" description="Nucleophile" evidence="2 4">
    <location>
        <position position="152"/>
    </location>
</feature>
<feature type="active site" description="Proton acceptor" evidence="2 4">
    <location>
        <position position="201"/>
    </location>
</feature>
<feature type="active site" evidence="2 6">
    <location>
        <position position="213"/>
    </location>
</feature>
<feature type="mutagenesis site" description="Abolishes host cell invasion.">
    <original>RGD</original>
    <variation>AGA</variation>
    <location>
        <begin position="188"/>
        <end position="190"/>
    </location>
</feature>
<feature type="helix" evidence="7">
    <location>
        <begin position="52"/>
        <end position="58"/>
    </location>
</feature>
<feature type="helix" evidence="7">
    <location>
        <begin position="60"/>
        <end position="80"/>
    </location>
</feature>
<feature type="helix" evidence="7">
    <location>
        <begin position="100"/>
        <end position="102"/>
    </location>
</feature>
<feature type="helix" evidence="7">
    <location>
        <begin position="105"/>
        <end position="107"/>
    </location>
</feature>
<feature type="helix" evidence="7">
    <location>
        <begin position="108"/>
        <end position="121"/>
    </location>
</feature>
<feature type="turn" evidence="7">
    <location>
        <begin position="122"/>
        <end position="124"/>
    </location>
</feature>
<feature type="strand" evidence="7">
    <location>
        <begin position="134"/>
        <end position="136"/>
    </location>
</feature>
<feature type="helix" evidence="7">
    <location>
        <begin position="142"/>
        <end position="144"/>
    </location>
</feature>
<feature type="strand" evidence="7">
    <location>
        <begin position="148"/>
        <end position="150"/>
    </location>
</feature>
<feature type="helix" evidence="7">
    <location>
        <begin position="152"/>
        <end position="161"/>
    </location>
</feature>
<feature type="turn" evidence="7">
    <location>
        <begin position="162"/>
        <end position="164"/>
    </location>
</feature>
<feature type="helix" evidence="7">
    <location>
        <begin position="171"/>
        <end position="174"/>
    </location>
</feature>
<feature type="strand" evidence="7">
    <location>
        <begin position="177"/>
        <end position="181"/>
    </location>
</feature>
<feature type="helix" evidence="7">
    <location>
        <begin position="183"/>
        <end position="185"/>
    </location>
</feature>
<feature type="strand" evidence="7">
    <location>
        <begin position="191"/>
        <end position="195"/>
    </location>
</feature>
<feature type="helix" evidence="7">
    <location>
        <begin position="196"/>
        <end position="198"/>
    </location>
</feature>
<feature type="strand" evidence="7">
    <location>
        <begin position="200"/>
        <end position="207"/>
    </location>
</feature>
<feature type="strand" evidence="7">
    <location>
        <begin position="210"/>
        <end position="215"/>
    </location>
</feature>
<feature type="turn" evidence="7">
    <location>
        <begin position="216"/>
        <end position="219"/>
    </location>
</feature>
<feature type="strand" evidence="7">
    <location>
        <begin position="220"/>
        <end position="225"/>
    </location>
</feature>
<feature type="strand" evidence="7">
    <location>
        <begin position="235"/>
        <end position="239"/>
    </location>
</feature>
<evidence type="ECO:0000255" key="1"/>
<evidence type="ECO:0000255" key="2">
    <source>
        <dbReference type="PROSITE-ProRule" id="PRU01284"/>
    </source>
</evidence>
<evidence type="ECO:0000269" key="3">
    <source>
    </source>
</evidence>
<evidence type="ECO:0000269" key="4">
    <source>
    </source>
</evidence>
<evidence type="ECO:0000305" key="5"/>
<evidence type="ECO:0000305" key="6">
    <source>
    </source>
</evidence>
<evidence type="ECO:0007829" key="7">
    <source>
        <dbReference type="PDB" id="3PBI"/>
    </source>
</evidence>